<organism>
    <name type="scientific">Geobacillus thermodenitrificans (strain NG80-2)</name>
    <dbReference type="NCBI Taxonomy" id="420246"/>
    <lineage>
        <taxon>Bacteria</taxon>
        <taxon>Bacillati</taxon>
        <taxon>Bacillota</taxon>
        <taxon>Bacilli</taxon>
        <taxon>Bacillales</taxon>
        <taxon>Anoxybacillaceae</taxon>
        <taxon>Geobacillus</taxon>
    </lineage>
</organism>
<gene>
    <name evidence="1" type="primary">mutS</name>
    <name type="ordered locus">GTNG_1160</name>
</gene>
<keyword id="KW-0067">ATP-binding</keyword>
<keyword id="KW-0227">DNA damage</keyword>
<keyword id="KW-0234">DNA repair</keyword>
<keyword id="KW-0238">DNA-binding</keyword>
<keyword id="KW-0547">Nucleotide-binding</keyword>
<comment type="function">
    <text evidence="1">This protein is involved in the repair of mismatches in DNA. It is possible that it carries out the mismatch recognition step. This protein has a weak ATPase activity.</text>
</comment>
<comment type="similarity">
    <text evidence="1">Belongs to the DNA mismatch repair MutS family.</text>
</comment>
<feature type="chain" id="PRO_0000335160" description="DNA mismatch repair protein MutS">
    <location>
        <begin position="1"/>
        <end position="910"/>
    </location>
</feature>
<feature type="binding site" evidence="1">
    <location>
        <begin position="607"/>
        <end position="614"/>
    </location>
    <ligand>
        <name>ATP</name>
        <dbReference type="ChEBI" id="CHEBI:30616"/>
    </ligand>
</feature>
<proteinExistence type="inferred from homology"/>
<reference key="1">
    <citation type="journal article" date="2007" name="Proc. Natl. Acad. Sci. U.S.A.">
        <title>Genome and proteome of long-chain alkane degrading Geobacillus thermodenitrificans NG80-2 isolated from a deep-subsurface oil reservoir.</title>
        <authorList>
            <person name="Feng L."/>
            <person name="Wang W."/>
            <person name="Cheng J."/>
            <person name="Ren Y."/>
            <person name="Zhao G."/>
            <person name="Gao C."/>
            <person name="Tang Y."/>
            <person name="Liu X."/>
            <person name="Han W."/>
            <person name="Peng X."/>
            <person name="Liu R."/>
            <person name="Wang L."/>
        </authorList>
    </citation>
    <scope>NUCLEOTIDE SEQUENCE [LARGE SCALE GENOMIC DNA]</scope>
    <source>
        <strain>NG80-2</strain>
    </source>
</reference>
<name>MUTS_GEOTN</name>
<protein>
    <recommendedName>
        <fullName evidence="1">DNA mismatch repair protein MutS</fullName>
    </recommendedName>
</protein>
<evidence type="ECO:0000255" key="1">
    <source>
        <dbReference type="HAMAP-Rule" id="MF_00096"/>
    </source>
</evidence>
<accession>A4IMI0</accession>
<sequence>MMPSYTPMIQQYLHIKAQYPDAFLFFRLGDFYEMFFDDAIKAAQELEITLTSRDGGGDERVPMCGVPYHSAQGYIEQLVEKGYKVAICEQVEDPKTAKGVVRREVVQLVTPGTLMEGKGLTEKENHYLATLTPFADSTYGLAYADLSTGEVRLTLLSSWEETGNELHAIGAREIVISSDSAEEWVRELKERYGAAISYEDETWLRDEWSSVAGHVTQEKLRVTVARLLHYLVRTQKRQLDHLQPAELYQVDQYMKMDRHSKLHLELVETVRSKGRKGSLLWLLDETVTAMGGRLLKQWLDRPLIDQRAIERRLDFVETLKTSYFERHELRDRLRDVYDIERLVGRIAYGNANARDLVQLKKSLSQVPSLRQTVSGLPLAEVDELVGRLDPCEELVDLLERAIQEQPPLSIKEGNIIKDGYDERLDRYRDASRNGKAWIAELEAKEREVTGIKSLKVGYNRVFGYYIEVTKPNLPLIPEGRYERKQTLANAERFITAELKEKEALILEAEEKSVELEYELFVAIREQVKEYIPRLQTLAKAIAELDVLQALATVSDERRYVRPQFSTERVLAIEGGRHPVVEKVLGAQTYVPNDCYMNREREMLLITGPNMAGKSTYMRQVALTAIMAQIGCFVPAERAVLPIFDQVFTRIGAADDLSAGQSTFMVEMLEARRAITHATQNSLILFDEIGRGTSTYDGMALAQAMIEYIHDHIGAKTLFSTHYHELTALESSLERLCNVHARAVEENGKVVFLHQIADGPADRSYGIHVAELAGLPISLIERARDILAKLEQSSGNGSLEQGIGEEAGRENGSLMEAASQQQSELELTVGSAADRVVEQSVERQAEHRASAGNEASFEQLSMFPDLAPAPVEPHLSSKEKKALAALKEVNLLEMTPLEALNKLYELQKLLK</sequence>
<dbReference type="EMBL" id="CP000557">
    <property type="protein sequence ID" value="ABO66534.1"/>
    <property type="molecule type" value="Genomic_DNA"/>
</dbReference>
<dbReference type="SMR" id="A4IMI0"/>
<dbReference type="KEGG" id="gtn:GTNG_1160"/>
<dbReference type="eggNOG" id="COG0249">
    <property type="taxonomic scope" value="Bacteria"/>
</dbReference>
<dbReference type="HOGENOM" id="CLU_002472_4_0_9"/>
<dbReference type="Proteomes" id="UP000001578">
    <property type="component" value="Chromosome"/>
</dbReference>
<dbReference type="GO" id="GO:0005829">
    <property type="term" value="C:cytosol"/>
    <property type="evidence" value="ECO:0007669"/>
    <property type="project" value="TreeGrafter"/>
</dbReference>
<dbReference type="GO" id="GO:0005524">
    <property type="term" value="F:ATP binding"/>
    <property type="evidence" value="ECO:0007669"/>
    <property type="project" value="UniProtKB-UniRule"/>
</dbReference>
<dbReference type="GO" id="GO:0140664">
    <property type="term" value="F:ATP-dependent DNA damage sensor activity"/>
    <property type="evidence" value="ECO:0007669"/>
    <property type="project" value="InterPro"/>
</dbReference>
<dbReference type="GO" id="GO:0003684">
    <property type="term" value="F:damaged DNA binding"/>
    <property type="evidence" value="ECO:0007669"/>
    <property type="project" value="UniProtKB-UniRule"/>
</dbReference>
<dbReference type="GO" id="GO:0030983">
    <property type="term" value="F:mismatched DNA binding"/>
    <property type="evidence" value="ECO:0007669"/>
    <property type="project" value="InterPro"/>
</dbReference>
<dbReference type="GO" id="GO:0006298">
    <property type="term" value="P:mismatch repair"/>
    <property type="evidence" value="ECO:0007669"/>
    <property type="project" value="UniProtKB-UniRule"/>
</dbReference>
<dbReference type="CDD" id="cd03284">
    <property type="entry name" value="ABC_MutS1"/>
    <property type="match status" value="1"/>
</dbReference>
<dbReference type="FunFam" id="1.10.1420.10:FF:000007">
    <property type="entry name" value="DNA mismatch repair protein MutS"/>
    <property type="match status" value="1"/>
</dbReference>
<dbReference type="FunFam" id="3.40.1170.10:FF:000001">
    <property type="entry name" value="DNA mismatch repair protein MutS"/>
    <property type="match status" value="1"/>
</dbReference>
<dbReference type="Gene3D" id="1.10.1420.10">
    <property type="match status" value="2"/>
</dbReference>
<dbReference type="Gene3D" id="3.40.1170.10">
    <property type="entry name" value="DNA repair protein MutS, domain I"/>
    <property type="match status" value="1"/>
</dbReference>
<dbReference type="Gene3D" id="3.30.420.110">
    <property type="entry name" value="MutS, connector domain"/>
    <property type="match status" value="1"/>
</dbReference>
<dbReference type="Gene3D" id="3.40.50.300">
    <property type="entry name" value="P-loop containing nucleotide triphosphate hydrolases"/>
    <property type="match status" value="1"/>
</dbReference>
<dbReference type="HAMAP" id="MF_00096">
    <property type="entry name" value="MutS"/>
    <property type="match status" value="1"/>
</dbReference>
<dbReference type="InterPro" id="IPR005748">
    <property type="entry name" value="DNA_mismatch_repair_MutS"/>
</dbReference>
<dbReference type="InterPro" id="IPR007695">
    <property type="entry name" value="DNA_mismatch_repair_MutS-lik_N"/>
</dbReference>
<dbReference type="InterPro" id="IPR017261">
    <property type="entry name" value="DNA_mismatch_repair_MutS/MSH"/>
</dbReference>
<dbReference type="InterPro" id="IPR000432">
    <property type="entry name" value="DNA_mismatch_repair_MutS_C"/>
</dbReference>
<dbReference type="InterPro" id="IPR007861">
    <property type="entry name" value="DNA_mismatch_repair_MutS_clamp"/>
</dbReference>
<dbReference type="InterPro" id="IPR007696">
    <property type="entry name" value="DNA_mismatch_repair_MutS_core"/>
</dbReference>
<dbReference type="InterPro" id="IPR016151">
    <property type="entry name" value="DNA_mismatch_repair_MutS_N"/>
</dbReference>
<dbReference type="InterPro" id="IPR036187">
    <property type="entry name" value="DNA_mismatch_repair_MutS_sf"/>
</dbReference>
<dbReference type="InterPro" id="IPR007860">
    <property type="entry name" value="DNA_mmatch_repair_MutS_con_dom"/>
</dbReference>
<dbReference type="InterPro" id="IPR045076">
    <property type="entry name" value="MutS"/>
</dbReference>
<dbReference type="InterPro" id="IPR036678">
    <property type="entry name" value="MutS_con_dom_sf"/>
</dbReference>
<dbReference type="InterPro" id="IPR027417">
    <property type="entry name" value="P-loop_NTPase"/>
</dbReference>
<dbReference type="NCBIfam" id="TIGR01070">
    <property type="entry name" value="mutS1"/>
    <property type="match status" value="1"/>
</dbReference>
<dbReference type="NCBIfam" id="NF003810">
    <property type="entry name" value="PRK05399.1"/>
    <property type="match status" value="1"/>
</dbReference>
<dbReference type="PANTHER" id="PTHR11361:SF34">
    <property type="entry name" value="DNA MISMATCH REPAIR PROTEIN MSH1, MITOCHONDRIAL"/>
    <property type="match status" value="1"/>
</dbReference>
<dbReference type="PANTHER" id="PTHR11361">
    <property type="entry name" value="DNA MISMATCH REPAIR PROTEIN MUTS FAMILY MEMBER"/>
    <property type="match status" value="1"/>
</dbReference>
<dbReference type="Pfam" id="PF01624">
    <property type="entry name" value="MutS_I"/>
    <property type="match status" value="1"/>
</dbReference>
<dbReference type="Pfam" id="PF05188">
    <property type="entry name" value="MutS_II"/>
    <property type="match status" value="1"/>
</dbReference>
<dbReference type="Pfam" id="PF05192">
    <property type="entry name" value="MutS_III"/>
    <property type="match status" value="1"/>
</dbReference>
<dbReference type="Pfam" id="PF05190">
    <property type="entry name" value="MutS_IV"/>
    <property type="match status" value="1"/>
</dbReference>
<dbReference type="Pfam" id="PF00488">
    <property type="entry name" value="MutS_V"/>
    <property type="match status" value="1"/>
</dbReference>
<dbReference type="PIRSF" id="PIRSF037677">
    <property type="entry name" value="DNA_mis_repair_Msh6"/>
    <property type="match status" value="1"/>
</dbReference>
<dbReference type="SMART" id="SM00534">
    <property type="entry name" value="MUTSac"/>
    <property type="match status" value="1"/>
</dbReference>
<dbReference type="SMART" id="SM00533">
    <property type="entry name" value="MUTSd"/>
    <property type="match status" value="1"/>
</dbReference>
<dbReference type="SUPFAM" id="SSF55271">
    <property type="entry name" value="DNA repair protein MutS, domain I"/>
    <property type="match status" value="1"/>
</dbReference>
<dbReference type="SUPFAM" id="SSF53150">
    <property type="entry name" value="DNA repair protein MutS, domain II"/>
    <property type="match status" value="1"/>
</dbReference>
<dbReference type="SUPFAM" id="SSF48334">
    <property type="entry name" value="DNA repair protein MutS, domain III"/>
    <property type="match status" value="1"/>
</dbReference>
<dbReference type="SUPFAM" id="SSF52540">
    <property type="entry name" value="P-loop containing nucleoside triphosphate hydrolases"/>
    <property type="match status" value="1"/>
</dbReference>
<dbReference type="PROSITE" id="PS00486">
    <property type="entry name" value="DNA_MISMATCH_REPAIR_2"/>
    <property type="match status" value="1"/>
</dbReference>